<accession>A6MMA6</accession>
<name>PSBI_CHLSC</name>
<reference key="1">
    <citation type="journal article" date="2007" name="Mol. Phylogenet. Evol.">
        <title>Phylogenetic and evolutionary implications of complete chloroplast genome sequences of four early-diverging angiosperms: Buxus (Buxaceae), Chloranthus (Chloranthaceae), Dioscorea (Dioscoreaceae), and Illicium (Schisandraceae).</title>
        <authorList>
            <person name="Hansen D.R."/>
            <person name="Dastidar S.G."/>
            <person name="Cai Z."/>
            <person name="Penaflor C."/>
            <person name="Kuehl J.V."/>
            <person name="Boore J.L."/>
            <person name="Jansen R.K."/>
        </authorList>
    </citation>
    <scope>NUCLEOTIDE SEQUENCE [LARGE SCALE GENOMIC DNA]</scope>
</reference>
<geneLocation type="chloroplast"/>
<proteinExistence type="inferred from homology"/>
<evidence type="ECO:0000255" key="1">
    <source>
        <dbReference type="HAMAP-Rule" id="MF_01316"/>
    </source>
</evidence>
<gene>
    <name evidence="1" type="primary">psbI</name>
</gene>
<comment type="function">
    <text evidence="1">One of the components of the core complex of photosystem II (PSII), required for its stability and/or assembly. PSII is a light-driven water:plastoquinone oxidoreductase that uses light energy to abstract electrons from H(2)O, generating O(2) and a proton gradient subsequently used for ATP formation. It consists of a core antenna complex that captures photons, and an electron transfer chain that converts photonic excitation into a charge separation.</text>
</comment>
<comment type="subunit">
    <text evidence="1">PSII is composed of 1 copy each of membrane proteins PsbA, PsbB, PsbC, PsbD, PsbE, PsbF, PsbH, PsbI, PsbJ, PsbK, PsbL, PsbM, PsbT, PsbX, PsbY, PsbZ, Psb30/Ycf12, at least 3 peripheral proteins of the oxygen-evolving complex and a large number of cofactors. It forms dimeric complexes.</text>
</comment>
<comment type="subcellular location">
    <subcellularLocation>
        <location evidence="1">Plastid</location>
        <location evidence="1">Chloroplast thylakoid membrane</location>
        <topology evidence="1">Single-pass membrane protein</topology>
    </subcellularLocation>
</comment>
<comment type="similarity">
    <text evidence="1">Belongs to the PsbI family.</text>
</comment>
<sequence length="36" mass="4168">MLTLKLFVYTVVIFFVSLFIFGFLSNDPGRNPGREE</sequence>
<feature type="chain" id="PRO_0000353222" description="Photosystem II reaction center protein I">
    <location>
        <begin position="1"/>
        <end position="36"/>
    </location>
</feature>
<feature type="transmembrane region" description="Helical" evidence="1">
    <location>
        <begin position="4"/>
        <end position="24"/>
    </location>
</feature>
<keyword id="KW-0150">Chloroplast</keyword>
<keyword id="KW-0472">Membrane</keyword>
<keyword id="KW-0602">Photosynthesis</keyword>
<keyword id="KW-0604">Photosystem II</keyword>
<keyword id="KW-0934">Plastid</keyword>
<keyword id="KW-0674">Reaction center</keyword>
<keyword id="KW-0793">Thylakoid</keyword>
<keyword id="KW-0812">Transmembrane</keyword>
<keyword id="KW-1133">Transmembrane helix</keyword>
<organism>
    <name type="scientific">Chloranthus spicatus</name>
    <name type="common">Chulantree</name>
    <name type="synonym">Nigrina spicata</name>
    <dbReference type="NCBI Taxonomy" id="13006"/>
    <lineage>
        <taxon>Eukaryota</taxon>
        <taxon>Viridiplantae</taxon>
        <taxon>Streptophyta</taxon>
        <taxon>Embryophyta</taxon>
        <taxon>Tracheophyta</taxon>
        <taxon>Spermatophyta</taxon>
        <taxon>Magnoliopsida</taxon>
        <taxon>Chloranthales</taxon>
        <taxon>Chloranthaceae</taxon>
        <taxon>Chloranthus</taxon>
    </lineage>
</organism>
<dbReference type="EMBL" id="EF380352">
    <property type="protein sequence ID" value="ABQ43244.1"/>
    <property type="molecule type" value="Genomic_DNA"/>
</dbReference>
<dbReference type="RefSeq" id="YP_001294082.1">
    <property type="nucleotide sequence ID" value="NC_009598.1"/>
</dbReference>
<dbReference type="SMR" id="A6MMA6"/>
<dbReference type="GeneID" id="5236455"/>
<dbReference type="GO" id="GO:0009535">
    <property type="term" value="C:chloroplast thylakoid membrane"/>
    <property type="evidence" value="ECO:0007669"/>
    <property type="project" value="UniProtKB-SubCell"/>
</dbReference>
<dbReference type="GO" id="GO:0009539">
    <property type="term" value="C:photosystem II reaction center"/>
    <property type="evidence" value="ECO:0007669"/>
    <property type="project" value="InterPro"/>
</dbReference>
<dbReference type="GO" id="GO:0015979">
    <property type="term" value="P:photosynthesis"/>
    <property type="evidence" value="ECO:0007669"/>
    <property type="project" value="UniProtKB-UniRule"/>
</dbReference>
<dbReference type="HAMAP" id="MF_01316">
    <property type="entry name" value="PSII_PsbI"/>
    <property type="match status" value="1"/>
</dbReference>
<dbReference type="InterPro" id="IPR003686">
    <property type="entry name" value="PSII_PsbI"/>
</dbReference>
<dbReference type="InterPro" id="IPR037271">
    <property type="entry name" value="PSII_PsbI_sf"/>
</dbReference>
<dbReference type="NCBIfam" id="NF002735">
    <property type="entry name" value="PRK02655.1"/>
    <property type="match status" value="1"/>
</dbReference>
<dbReference type="PANTHER" id="PTHR35772">
    <property type="entry name" value="PHOTOSYSTEM II REACTION CENTER PROTEIN I"/>
    <property type="match status" value="1"/>
</dbReference>
<dbReference type="PANTHER" id="PTHR35772:SF1">
    <property type="entry name" value="PHOTOSYSTEM II REACTION CENTER PROTEIN I"/>
    <property type="match status" value="1"/>
</dbReference>
<dbReference type="Pfam" id="PF02532">
    <property type="entry name" value="PsbI"/>
    <property type="match status" value="1"/>
</dbReference>
<dbReference type="SUPFAM" id="SSF161041">
    <property type="entry name" value="Photosystem II reaction center protein I, PsbI"/>
    <property type="match status" value="1"/>
</dbReference>
<protein>
    <recommendedName>
        <fullName evidence="1">Photosystem II reaction center protein I</fullName>
        <shortName evidence="1">PSII-I</shortName>
    </recommendedName>
    <alternativeName>
        <fullName evidence="1">PSII 4.8 kDa protein</fullName>
    </alternativeName>
</protein>